<name>QUEC_ESCF3</name>
<protein>
    <recommendedName>
        <fullName evidence="1">7-cyano-7-deazaguanine synthase</fullName>
        <ecNumber evidence="1">6.3.4.20</ecNumber>
    </recommendedName>
    <alternativeName>
        <fullName evidence="1">7-cyano-7-carbaguanine synthase</fullName>
    </alternativeName>
    <alternativeName>
        <fullName evidence="1">PreQ(0) synthase</fullName>
    </alternativeName>
    <alternativeName>
        <fullName evidence="1">Queuosine biosynthesis protein QueC</fullName>
    </alternativeName>
</protein>
<proteinExistence type="inferred from homology"/>
<sequence length="231" mass="25491">MKRAVVVFSGGQDSTTCLVQALQQYDEVHCVTFDYGQRHRAEIDVARELALKLGARAHKVLDVTLLNELAVSSLTRDSIPVPDYEPEADGIPNTFVPGRNILFLTLAAIYAYQVKAEAVITGVCETDFSGYPDCRDEFVKALNHAVSLGMAKDIRFETPLMWIDKAETWALADYYGKLDLVRNETLTCYNGIKGDGCGHCAACNLRSNGLHHYLADKPTVMAAMKQKTGLK</sequence>
<dbReference type="EC" id="6.3.4.20" evidence="1"/>
<dbReference type="EMBL" id="CU928158">
    <property type="protein sequence ID" value="CAQ90068.1"/>
    <property type="molecule type" value="Genomic_DNA"/>
</dbReference>
<dbReference type="RefSeq" id="WP_000817234.1">
    <property type="nucleotide sequence ID" value="NC_011740.1"/>
</dbReference>
<dbReference type="SMR" id="B7LMD5"/>
<dbReference type="GeneID" id="75056396"/>
<dbReference type="KEGG" id="efe:EFER_2573"/>
<dbReference type="HOGENOM" id="CLU_081854_0_0_6"/>
<dbReference type="OrthoDB" id="9789567at2"/>
<dbReference type="UniPathway" id="UPA00391"/>
<dbReference type="Proteomes" id="UP000000745">
    <property type="component" value="Chromosome"/>
</dbReference>
<dbReference type="GO" id="GO:0005524">
    <property type="term" value="F:ATP binding"/>
    <property type="evidence" value="ECO:0007669"/>
    <property type="project" value="UniProtKB-UniRule"/>
</dbReference>
<dbReference type="GO" id="GO:0016879">
    <property type="term" value="F:ligase activity, forming carbon-nitrogen bonds"/>
    <property type="evidence" value="ECO:0007669"/>
    <property type="project" value="UniProtKB-UniRule"/>
</dbReference>
<dbReference type="GO" id="GO:0008270">
    <property type="term" value="F:zinc ion binding"/>
    <property type="evidence" value="ECO:0007669"/>
    <property type="project" value="UniProtKB-UniRule"/>
</dbReference>
<dbReference type="GO" id="GO:0008616">
    <property type="term" value="P:queuosine biosynthetic process"/>
    <property type="evidence" value="ECO:0007669"/>
    <property type="project" value="UniProtKB-UniRule"/>
</dbReference>
<dbReference type="CDD" id="cd01995">
    <property type="entry name" value="QueC-like"/>
    <property type="match status" value="1"/>
</dbReference>
<dbReference type="FunFam" id="3.40.50.620:FF:000017">
    <property type="entry name" value="7-cyano-7-deazaguanine synthase"/>
    <property type="match status" value="1"/>
</dbReference>
<dbReference type="Gene3D" id="3.40.50.620">
    <property type="entry name" value="HUPs"/>
    <property type="match status" value="1"/>
</dbReference>
<dbReference type="HAMAP" id="MF_01633">
    <property type="entry name" value="QueC"/>
    <property type="match status" value="1"/>
</dbReference>
<dbReference type="InterPro" id="IPR018317">
    <property type="entry name" value="QueC"/>
</dbReference>
<dbReference type="InterPro" id="IPR014729">
    <property type="entry name" value="Rossmann-like_a/b/a_fold"/>
</dbReference>
<dbReference type="NCBIfam" id="TIGR00364">
    <property type="entry name" value="7-cyano-7-deazaguanine synthase QueC"/>
    <property type="match status" value="1"/>
</dbReference>
<dbReference type="NCBIfam" id="NF008317">
    <property type="entry name" value="PRK11106.1"/>
    <property type="match status" value="1"/>
</dbReference>
<dbReference type="PANTHER" id="PTHR42914">
    <property type="entry name" value="7-CYANO-7-DEAZAGUANINE SYNTHASE"/>
    <property type="match status" value="1"/>
</dbReference>
<dbReference type="PANTHER" id="PTHR42914:SF1">
    <property type="entry name" value="7-CYANO-7-DEAZAGUANINE SYNTHASE"/>
    <property type="match status" value="1"/>
</dbReference>
<dbReference type="Pfam" id="PF06508">
    <property type="entry name" value="QueC"/>
    <property type="match status" value="1"/>
</dbReference>
<dbReference type="PIRSF" id="PIRSF006293">
    <property type="entry name" value="ExsB"/>
    <property type="match status" value="1"/>
</dbReference>
<dbReference type="SUPFAM" id="SSF52402">
    <property type="entry name" value="Adenine nucleotide alpha hydrolases-like"/>
    <property type="match status" value="1"/>
</dbReference>
<reference key="1">
    <citation type="journal article" date="2009" name="PLoS Genet.">
        <title>Organised genome dynamics in the Escherichia coli species results in highly diverse adaptive paths.</title>
        <authorList>
            <person name="Touchon M."/>
            <person name="Hoede C."/>
            <person name="Tenaillon O."/>
            <person name="Barbe V."/>
            <person name="Baeriswyl S."/>
            <person name="Bidet P."/>
            <person name="Bingen E."/>
            <person name="Bonacorsi S."/>
            <person name="Bouchier C."/>
            <person name="Bouvet O."/>
            <person name="Calteau A."/>
            <person name="Chiapello H."/>
            <person name="Clermont O."/>
            <person name="Cruveiller S."/>
            <person name="Danchin A."/>
            <person name="Diard M."/>
            <person name="Dossat C."/>
            <person name="Karoui M.E."/>
            <person name="Frapy E."/>
            <person name="Garry L."/>
            <person name="Ghigo J.M."/>
            <person name="Gilles A.M."/>
            <person name="Johnson J."/>
            <person name="Le Bouguenec C."/>
            <person name="Lescat M."/>
            <person name="Mangenot S."/>
            <person name="Martinez-Jehanne V."/>
            <person name="Matic I."/>
            <person name="Nassif X."/>
            <person name="Oztas S."/>
            <person name="Petit M.A."/>
            <person name="Pichon C."/>
            <person name="Rouy Z."/>
            <person name="Ruf C.S."/>
            <person name="Schneider D."/>
            <person name="Tourret J."/>
            <person name="Vacherie B."/>
            <person name="Vallenet D."/>
            <person name="Medigue C."/>
            <person name="Rocha E.P.C."/>
            <person name="Denamur E."/>
        </authorList>
    </citation>
    <scope>NUCLEOTIDE SEQUENCE [LARGE SCALE GENOMIC DNA]</scope>
    <source>
        <strain>ATCC 35469 / DSM 13698 / BCRC 15582 / CCUG 18766 / IAM 14443 / JCM 21226 / LMG 7866 / NBRC 102419 / NCTC 12128 / CDC 0568-73</strain>
    </source>
</reference>
<comment type="function">
    <text evidence="1">Catalyzes the ATP-dependent conversion of 7-carboxy-7-deazaguanine (CDG) to 7-cyano-7-deazaguanine (preQ(0)).</text>
</comment>
<comment type="catalytic activity">
    <reaction evidence="1">
        <text>7-carboxy-7-deazaguanine + NH4(+) + ATP = 7-cyano-7-deazaguanine + ADP + phosphate + H2O + H(+)</text>
        <dbReference type="Rhea" id="RHEA:27982"/>
        <dbReference type="ChEBI" id="CHEBI:15377"/>
        <dbReference type="ChEBI" id="CHEBI:15378"/>
        <dbReference type="ChEBI" id="CHEBI:28938"/>
        <dbReference type="ChEBI" id="CHEBI:30616"/>
        <dbReference type="ChEBI" id="CHEBI:43474"/>
        <dbReference type="ChEBI" id="CHEBI:45075"/>
        <dbReference type="ChEBI" id="CHEBI:61036"/>
        <dbReference type="ChEBI" id="CHEBI:456216"/>
        <dbReference type="EC" id="6.3.4.20"/>
    </reaction>
</comment>
<comment type="cofactor">
    <cofactor evidence="1">
        <name>Zn(2+)</name>
        <dbReference type="ChEBI" id="CHEBI:29105"/>
    </cofactor>
    <text evidence="1">Binds 1 zinc ion per subunit.</text>
</comment>
<comment type="pathway">
    <text evidence="1">Purine metabolism; 7-cyano-7-deazaguanine biosynthesis.</text>
</comment>
<comment type="similarity">
    <text evidence="1">Belongs to the QueC family.</text>
</comment>
<accession>B7LMD5</accession>
<organism>
    <name type="scientific">Escherichia fergusonii (strain ATCC 35469 / DSM 13698 / CCUG 18766 / IAM 14443 / JCM 21226 / LMG 7866 / NBRC 102419 / NCTC 12128 / CDC 0568-73)</name>
    <dbReference type="NCBI Taxonomy" id="585054"/>
    <lineage>
        <taxon>Bacteria</taxon>
        <taxon>Pseudomonadati</taxon>
        <taxon>Pseudomonadota</taxon>
        <taxon>Gammaproteobacteria</taxon>
        <taxon>Enterobacterales</taxon>
        <taxon>Enterobacteriaceae</taxon>
        <taxon>Escherichia</taxon>
    </lineage>
</organism>
<keyword id="KW-0067">ATP-binding</keyword>
<keyword id="KW-0436">Ligase</keyword>
<keyword id="KW-0479">Metal-binding</keyword>
<keyword id="KW-0547">Nucleotide-binding</keyword>
<keyword id="KW-0671">Queuosine biosynthesis</keyword>
<keyword id="KW-0862">Zinc</keyword>
<gene>
    <name evidence="1" type="primary">queC</name>
    <name type="ordered locus">EFER_2573</name>
</gene>
<feature type="chain" id="PRO_1000186599" description="7-cyano-7-deazaguanine synthase">
    <location>
        <begin position="1"/>
        <end position="231"/>
    </location>
</feature>
<feature type="binding site" evidence="1">
    <location>
        <begin position="8"/>
        <end position="18"/>
    </location>
    <ligand>
        <name>ATP</name>
        <dbReference type="ChEBI" id="CHEBI:30616"/>
    </ligand>
</feature>
<feature type="binding site" evidence="1">
    <location>
        <position position="188"/>
    </location>
    <ligand>
        <name>Zn(2+)</name>
        <dbReference type="ChEBI" id="CHEBI:29105"/>
    </ligand>
</feature>
<feature type="binding site" evidence="1">
    <location>
        <position position="197"/>
    </location>
    <ligand>
        <name>Zn(2+)</name>
        <dbReference type="ChEBI" id="CHEBI:29105"/>
    </ligand>
</feature>
<feature type="binding site" evidence="1">
    <location>
        <position position="200"/>
    </location>
    <ligand>
        <name>Zn(2+)</name>
        <dbReference type="ChEBI" id="CHEBI:29105"/>
    </ligand>
</feature>
<feature type="binding site" evidence="1">
    <location>
        <position position="203"/>
    </location>
    <ligand>
        <name>Zn(2+)</name>
        <dbReference type="ChEBI" id="CHEBI:29105"/>
    </ligand>
</feature>
<evidence type="ECO:0000255" key="1">
    <source>
        <dbReference type="HAMAP-Rule" id="MF_01633"/>
    </source>
</evidence>